<organism>
    <name type="scientific">Mus musculus</name>
    <name type="common">Mouse</name>
    <dbReference type="NCBI Taxonomy" id="10090"/>
    <lineage>
        <taxon>Eukaryota</taxon>
        <taxon>Metazoa</taxon>
        <taxon>Chordata</taxon>
        <taxon>Craniata</taxon>
        <taxon>Vertebrata</taxon>
        <taxon>Euteleostomi</taxon>
        <taxon>Mammalia</taxon>
        <taxon>Eutheria</taxon>
        <taxon>Euarchontoglires</taxon>
        <taxon>Glires</taxon>
        <taxon>Rodentia</taxon>
        <taxon>Myomorpha</taxon>
        <taxon>Muroidea</taxon>
        <taxon>Muridae</taxon>
        <taxon>Murinae</taxon>
        <taxon>Mus</taxon>
        <taxon>Mus</taxon>
    </lineage>
</organism>
<feature type="initiator methionine" description="Removed" evidence="6">
    <location>
        <position position="1"/>
    </location>
</feature>
<feature type="chain" id="PRO_0000307751" description="RNA-binding protein 42">
    <location>
        <begin position="2"/>
        <end position="478"/>
    </location>
</feature>
<feature type="domain" description="RRM" evidence="3">
    <location>
        <begin position="379"/>
        <end position="457"/>
    </location>
</feature>
<feature type="region of interest" description="Disordered" evidence="4">
    <location>
        <begin position="1"/>
        <end position="33"/>
    </location>
</feature>
<feature type="region of interest" description="Disordered" evidence="4">
    <location>
        <begin position="171"/>
        <end position="207"/>
    </location>
</feature>
<feature type="region of interest" description="Necessary for interaction with HNRNPK" evidence="1">
    <location>
        <begin position="234"/>
        <end position="478"/>
    </location>
</feature>
<feature type="region of interest" description="Disordered" evidence="4">
    <location>
        <begin position="317"/>
        <end position="354"/>
    </location>
</feature>
<feature type="compositionally biased region" description="Low complexity" evidence="4">
    <location>
        <begin position="1"/>
        <end position="20"/>
    </location>
</feature>
<feature type="compositionally biased region" description="Pro residues" evidence="4">
    <location>
        <begin position="193"/>
        <end position="205"/>
    </location>
</feature>
<feature type="compositionally biased region" description="Basic and acidic residues" evidence="4">
    <location>
        <begin position="343"/>
        <end position="354"/>
    </location>
</feature>
<feature type="modified residue" description="N-acetylalanine" evidence="6">
    <location>
        <position position="2"/>
    </location>
</feature>
<feature type="modified residue" description="Phosphoserine" evidence="7">
    <location>
        <position position="133"/>
    </location>
</feature>
<feature type="modified residue" description="Asymmetric dimethylarginine" evidence="2">
    <location>
        <position position="151"/>
    </location>
</feature>
<feature type="modified residue" description="Asymmetric dimethylarginine" evidence="2">
    <location>
        <position position="156"/>
    </location>
</feature>
<feature type="modified residue" description="Asymmetric dimethylarginine" evidence="2">
    <location>
        <position position="166"/>
    </location>
</feature>
<feature type="modified residue" description="Asymmetric dimethylarginine" evidence="2">
    <location>
        <position position="179"/>
    </location>
</feature>
<feature type="sequence conflict" description="In Ref. 1; BAE30024." evidence="6" ref="1">
    <original>L</original>
    <variation>M</variation>
    <location>
        <position position="310"/>
    </location>
</feature>
<feature type="sequence conflict" description="In Ref. 1; BAE30024." evidence="6" ref="1">
    <original>K</original>
    <variation>E</variation>
    <location>
        <position position="350"/>
    </location>
</feature>
<feature type="sequence conflict" description="In Ref. 1; BAE30024." evidence="6" ref="1">
    <original>D</original>
    <variation>N</variation>
    <location>
        <position position="378"/>
    </location>
</feature>
<reference key="1">
    <citation type="journal article" date="2005" name="Science">
        <title>The transcriptional landscape of the mammalian genome.</title>
        <authorList>
            <person name="Carninci P."/>
            <person name="Kasukawa T."/>
            <person name="Katayama S."/>
            <person name="Gough J."/>
            <person name="Frith M.C."/>
            <person name="Maeda N."/>
            <person name="Oyama R."/>
            <person name="Ravasi T."/>
            <person name="Lenhard B."/>
            <person name="Wells C."/>
            <person name="Kodzius R."/>
            <person name="Shimokawa K."/>
            <person name="Bajic V.B."/>
            <person name="Brenner S.E."/>
            <person name="Batalov S."/>
            <person name="Forrest A.R."/>
            <person name="Zavolan M."/>
            <person name="Davis M.J."/>
            <person name="Wilming L.G."/>
            <person name="Aidinis V."/>
            <person name="Allen J.E."/>
            <person name="Ambesi-Impiombato A."/>
            <person name="Apweiler R."/>
            <person name="Aturaliya R.N."/>
            <person name="Bailey T.L."/>
            <person name="Bansal M."/>
            <person name="Baxter L."/>
            <person name="Beisel K.W."/>
            <person name="Bersano T."/>
            <person name="Bono H."/>
            <person name="Chalk A.M."/>
            <person name="Chiu K.P."/>
            <person name="Choudhary V."/>
            <person name="Christoffels A."/>
            <person name="Clutterbuck D.R."/>
            <person name="Crowe M.L."/>
            <person name="Dalla E."/>
            <person name="Dalrymple B.P."/>
            <person name="de Bono B."/>
            <person name="Della Gatta G."/>
            <person name="di Bernardo D."/>
            <person name="Down T."/>
            <person name="Engstrom P."/>
            <person name="Fagiolini M."/>
            <person name="Faulkner G."/>
            <person name="Fletcher C.F."/>
            <person name="Fukushima T."/>
            <person name="Furuno M."/>
            <person name="Futaki S."/>
            <person name="Gariboldi M."/>
            <person name="Georgii-Hemming P."/>
            <person name="Gingeras T.R."/>
            <person name="Gojobori T."/>
            <person name="Green R.E."/>
            <person name="Gustincich S."/>
            <person name="Harbers M."/>
            <person name="Hayashi Y."/>
            <person name="Hensch T.K."/>
            <person name="Hirokawa N."/>
            <person name="Hill D."/>
            <person name="Huminiecki L."/>
            <person name="Iacono M."/>
            <person name="Ikeo K."/>
            <person name="Iwama A."/>
            <person name="Ishikawa T."/>
            <person name="Jakt M."/>
            <person name="Kanapin A."/>
            <person name="Katoh M."/>
            <person name="Kawasawa Y."/>
            <person name="Kelso J."/>
            <person name="Kitamura H."/>
            <person name="Kitano H."/>
            <person name="Kollias G."/>
            <person name="Krishnan S.P."/>
            <person name="Kruger A."/>
            <person name="Kummerfeld S.K."/>
            <person name="Kurochkin I.V."/>
            <person name="Lareau L.F."/>
            <person name="Lazarevic D."/>
            <person name="Lipovich L."/>
            <person name="Liu J."/>
            <person name="Liuni S."/>
            <person name="McWilliam S."/>
            <person name="Madan Babu M."/>
            <person name="Madera M."/>
            <person name="Marchionni L."/>
            <person name="Matsuda H."/>
            <person name="Matsuzawa S."/>
            <person name="Miki H."/>
            <person name="Mignone F."/>
            <person name="Miyake S."/>
            <person name="Morris K."/>
            <person name="Mottagui-Tabar S."/>
            <person name="Mulder N."/>
            <person name="Nakano N."/>
            <person name="Nakauchi H."/>
            <person name="Ng P."/>
            <person name="Nilsson R."/>
            <person name="Nishiguchi S."/>
            <person name="Nishikawa S."/>
            <person name="Nori F."/>
            <person name="Ohara O."/>
            <person name="Okazaki Y."/>
            <person name="Orlando V."/>
            <person name="Pang K.C."/>
            <person name="Pavan W.J."/>
            <person name="Pavesi G."/>
            <person name="Pesole G."/>
            <person name="Petrovsky N."/>
            <person name="Piazza S."/>
            <person name="Reed J."/>
            <person name="Reid J.F."/>
            <person name="Ring B.Z."/>
            <person name="Ringwald M."/>
            <person name="Rost B."/>
            <person name="Ruan Y."/>
            <person name="Salzberg S.L."/>
            <person name="Sandelin A."/>
            <person name="Schneider C."/>
            <person name="Schoenbach C."/>
            <person name="Sekiguchi K."/>
            <person name="Semple C.A."/>
            <person name="Seno S."/>
            <person name="Sessa L."/>
            <person name="Sheng Y."/>
            <person name="Shibata Y."/>
            <person name="Shimada H."/>
            <person name="Shimada K."/>
            <person name="Silva D."/>
            <person name="Sinclair B."/>
            <person name="Sperling S."/>
            <person name="Stupka E."/>
            <person name="Sugiura K."/>
            <person name="Sultana R."/>
            <person name="Takenaka Y."/>
            <person name="Taki K."/>
            <person name="Tammoja K."/>
            <person name="Tan S.L."/>
            <person name="Tang S."/>
            <person name="Taylor M.S."/>
            <person name="Tegner J."/>
            <person name="Teichmann S.A."/>
            <person name="Ueda H.R."/>
            <person name="van Nimwegen E."/>
            <person name="Verardo R."/>
            <person name="Wei C.L."/>
            <person name="Yagi K."/>
            <person name="Yamanishi H."/>
            <person name="Zabarovsky E."/>
            <person name="Zhu S."/>
            <person name="Zimmer A."/>
            <person name="Hide W."/>
            <person name="Bult C."/>
            <person name="Grimmond S.M."/>
            <person name="Teasdale R.D."/>
            <person name="Liu E.T."/>
            <person name="Brusic V."/>
            <person name="Quackenbush J."/>
            <person name="Wahlestedt C."/>
            <person name="Mattick J.S."/>
            <person name="Hume D.A."/>
            <person name="Kai C."/>
            <person name="Sasaki D."/>
            <person name="Tomaru Y."/>
            <person name="Fukuda S."/>
            <person name="Kanamori-Katayama M."/>
            <person name="Suzuki M."/>
            <person name="Aoki J."/>
            <person name="Arakawa T."/>
            <person name="Iida J."/>
            <person name="Imamura K."/>
            <person name="Itoh M."/>
            <person name="Kato T."/>
            <person name="Kawaji H."/>
            <person name="Kawagashira N."/>
            <person name="Kawashima T."/>
            <person name="Kojima M."/>
            <person name="Kondo S."/>
            <person name="Konno H."/>
            <person name="Nakano K."/>
            <person name="Ninomiya N."/>
            <person name="Nishio T."/>
            <person name="Okada M."/>
            <person name="Plessy C."/>
            <person name="Shibata K."/>
            <person name="Shiraki T."/>
            <person name="Suzuki S."/>
            <person name="Tagami M."/>
            <person name="Waki K."/>
            <person name="Watahiki A."/>
            <person name="Okamura-Oho Y."/>
            <person name="Suzuki H."/>
            <person name="Kawai J."/>
            <person name="Hayashizaki Y."/>
        </authorList>
    </citation>
    <scope>NUCLEOTIDE SEQUENCE [LARGE SCALE MRNA]</scope>
    <source>
        <strain>C57BL/6J</strain>
        <tissue>Bone marrow</tissue>
    </source>
</reference>
<reference key="2">
    <citation type="journal article" date="2004" name="Genome Res.">
        <title>The status, quality, and expansion of the NIH full-length cDNA project: the Mammalian Gene Collection (MGC).</title>
        <authorList>
            <consortium name="The MGC Project Team"/>
        </authorList>
    </citation>
    <scope>NUCLEOTIDE SEQUENCE [LARGE SCALE MRNA]</scope>
    <source>
        <strain>129</strain>
        <strain>FVB/N</strain>
        <tissue>Mammary tumor</tissue>
    </source>
</reference>
<reference key="3">
    <citation type="journal article" date="2009" name="Genes Cells">
        <title>hnRNP K interacts with RNA binding motif protein 42 and functions in the maintenance of cellular ATP level during stress conditions.</title>
        <authorList>
            <person name="Fukuda T."/>
            <person name="Naiki T."/>
            <person name="Saito M."/>
            <person name="Irie K."/>
        </authorList>
    </citation>
    <scope>SUBCELLULAR LOCATION</scope>
    <scope>TISSUE SPECIFICITY</scope>
</reference>
<reference key="4">
    <citation type="journal article" date="2010" name="Cell">
        <title>A tissue-specific atlas of mouse protein phosphorylation and expression.</title>
        <authorList>
            <person name="Huttlin E.L."/>
            <person name="Jedrychowski M.P."/>
            <person name="Elias J.E."/>
            <person name="Goswami T."/>
            <person name="Rad R."/>
            <person name="Beausoleil S.A."/>
            <person name="Villen J."/>
            <person name="Haas W."/>
            <person name="Sowa M.E."/>
            <person name="Gygi S.P."/>
        </authorList>
    </citation>
    <scope>PHOSPHORYLATION [LARGE SCALE ANALYSIS] AT SER-133</scope>
    <scope>IDENTIFICATION BY MASS SPECTROMETRY [LARGE SCALE ANALYSIS]</scope>
    <source>
        <tissue>Spleen</tissue>
        <tissue>Testis</tissue>
    </source>
</reference>
<sequence length="478" mass="50236">MASAMAGAGPAPGLPVAGGPVVPGPGVGIPGKSGEERLKEMEAEMALFEQEVLGAPVTGIPTAVPAVPTVEAMQVPPAPVIRPIIATNTYQQVQQTLEARAAAAATVVPPMVGGPPFVGPVGFGPADRGHLDSPEAREAMFLRRAAVAPQRAPILRPAFVPHVLQRADSALSSAAGGPRPMALRPPHQALVGPPLPGPPGPPMMLPPMARAPGPPLGSMAALRPPLEEPAAPRELGLGLGLGLKDKEEAVVAAAAGLEEASAAVAVGAGGAPAGPAVIGPSLPLALAMPLPEPEPLPLPLEVVRGLLPPLRIPELLSLRPRPRPPRPEPPPGLMALEVPEPLGEDKKKGKPEKLKRCIRTAAGSSWEDPSLLEWDADDFRIFCGDLGNEVNDDILARAFSRFPSFLKAKVIRDKRTGKTKGYGFVSFKDPSDYVRAMREMNGKYVGSRPIKLRKSMWKDRNLDVVRKKQKEKKKLGLR</sequence>
<proteinExistence type="evidence at protein level"/>
<dbReference type="EMBL" id="AK151000">
    <property type="protein sequence ID" value="BAE30024.1"/>
    <property type="molecule type" value="mRNA"/>
</dbReference>
<dbReference type="EMBL" id="BC009148">
    <property type="protein sequence ID" value="AAH09148.1"/>
    <property type="status" value="ALT_INIT"/>
    <property type="molecule type" value="mRNA"/>
</dbReference>
<dbReference type="EMBL" id="BC011286">
    <property type="protein sequence ID" value="AAH11286.1"/>
    <property type="status" value="ALT_INIT"/>
    <property type="molecule type" value="mRNA"/>
</dbReference>
<dbReference type="EMBL" id="BC027372">
    <property type="protein sequence ID" value="AAH27372.1"/>
    <property type="status" value="ALT_INIT"/>
    <property type="molecule type" value="mRNA"/>
</dbReference>
<dbReference type="EMBL" id="BC057928">
    <property type="protein sequence ID" value="AAH57928.1"/>
    <property type="status" value="ALT_INIT"/>
    <property type="molecule type" value="mRNA"/>
</dbReference>
<dbReference type="CCDS" id="CCDS52179.1"/>
<dbReference type="RefSeq" id="NP_598454.2">
    <property type="nucleotide sequence ID" value="NM_133693.2"/>
</dbReference>
<dbReference type="SMR" id="Q91V81"/>
<dbReference type="FunCoup" id="Q91V81">
    <property type="interactions" value="1038"/>
</dbReference>
<dbReference type="STRING" id="10090.ENSMUSP00000040005"/>
<dbReference type="iPTMnet" id="Q91V81"/>
<dbReference type="PhosphoSitePlus" id="Q91V81"/>
<dbReference type="jPOST" id="Q91V81"/>
<dbReference type="PaxDb" id="10090-ENSMUSP00000040005"/>
<dbReference type="PeptideAtlas" id="Q91V81"/>
<dbReference type="ProteomicsDB" id="255000"/>
<dbReference type="Pumba" id="Q91V81"/>
<dbReference type="Antibodypedia" id="29473">
    <property type="antibodies" value="138 antibodies from 22 providers"/>
</dbReference>
<dbReference type="Ensembl" id="ENSMUST00000042726.14">
    <property type="protein sequence ID" value="ENSMUSP00000040005.7"/>
    <property type="gene ID" value="ENSMUSG00000036733.17"/>
</dbReference>
<dbReference type="GeneID" id="68035"/>
<dbReference type="KEGG" id="mmu:68035"/>
<dbReference type="UCSC" id="uc009gfp.1">
    <property type="organism name" value="mouse"/>
</dbReference>
<dbReference type="AGR" id="MGI:1915285"/>
<dbReference type="CTD" id="79171"/>
<dbReference type="MGI" id="MGI:1915285">
    <property type="gene designation" value="Rbm42"/>
</dbReference>
<dbReference type="VEuPathDB" id="HostDB:ENSMUSG00000036733"/>
<dbReference type="eggNOG" id="KOG0226">
    <property type="taxonomic scope" value="Eukaryota"/>
</dbReference>
<dbReference type="GeneTree" id="ENSGT00930000151055"/>
<dbReference type="InParanoid" id="Q91V81"/>
<dbReference type="OMA" id="QRMPMMR"/>
<dbReference type="OrthoDB" id="1749473at2759"/>
<dbReference type="TreeFam" id="TF313946"/>
<dbReference type="Reactome" id="R-MMU-72163">
    <property type="pathway name" value="mRNA Splicing - Major Pathway"/>
</dbReference>
<dbReference type="BioGRID-ORCS" id="68035">
    <property type="hits" value="15 hits in 76 CRISPR screens"/>
</dbReference>
<dbReference type="ChiTaRS" id="Rbm42">
    <property type="organism name" value="mouse"/>
</dbReference>
<dbReference type="PRO" id="PR:Q91V81"/>
<dbReference type="Proteomes" id="UP000000589">
    <property type="component" value="Chromosome 7"/>
</dbReference>
<dbReference type="RNAct" id="Q91V81">
    <property type="molecule type" value="protein"/>
</dbReference>
<dbReference type="Bgee" id="ENSMUSG00000036733">
    <property type="expression patterns" value="Expressed in granulocyte and 66 other cell types or tissues"/>
</dbReference>
<dbReference type="ExpressionAtlas" id="Q91V81">
    <property type="expression patterns" value="baseline and differential"/>
</dbReference>
<dbReference type="GO" id="GO:0005737">
    <property type="term" value="C:cytoplasm"/>
    <property type="evidence" value="ECO:0007669"/>
    <property type="project" value="UniProtKB-SubCell"/>
</dbReference>
<dbReference type="GO" id="GO:0046540">
    <property type="term" value="C:U4/U6 x U5 tri-snRNP complex"/>
    <property type="evidence" value="ECO:0007669"/>
    <property type="project" value="Ensembl"/>
</dbReference>
<dbReference type="GO" id="GO:0003729">
    <property type="term" value="F:mRNA binding"/>
    <property type="evidence" value="ECO:0007669"/>
    <property type="project" value="InterPro"/>
</dbReference>
<dbReference type="GO" id="GO:0048025">
    <property type="term" value="P:negative regulation of mRNA splicing, via spliceosome"/>
    <property type="evidence" value="ECO:0000315"/>
    <property type="project" value="MGI"/>
</dbReference>
<dbReference type="CDD" id="cd12383">
    <property type="entry name" value="RRM_RBM42"/>
    <property type="match status" value="1"/>
</dbReference>
<dbReference type="FunFam" id="3.30.70.330:FF:000189">
    <property type="entry name" value="RNA-binding protein 42 isoform X2"/>
    <property type="match status" value="1"/>
</dbReference>
<dbReference type="Gene3D" id="3.30.70.330">
    <property type="match status" value="1"/>
</dbReference>
<dbReference type="InterPro" id="IPR012677">
    <property type="entry name" value="Nucleotide-bd_a/b_plait_sf"/>
</dbReference>
<dbReference type="InterPro" id="IPR035979">
    <property type="entry name" value="RBD_domain_sf"/>
</dbReference>
<dbReference type="InterPro" id="IPR050825">
    <property type="entry name" value="RBM42_RBP45_47-like"/>
</dbReference>
<dbReference type="InterPro" id="IPR034215">
    <property type="entry name" value="RBM42_RRM"/>
</dbReference>
<dbReference type="InterPro" id="IPR000504">
    <property type="entry name" value="RRM_dom"/>
</dbReference>
<dbReference type="PANTHER" id="PTHR47640:SF11">
    <property type="entry name" value="RNA-BINDING PROTEIN 42"/>
    <property type="match status" value="1"/>
</dbReference>
<dbReference type="PANTHER" id="PTHR47640">
    <property type="entry name" value="TRNA SELENOCYSTEINE 1-ASSOCIATED PROTEIN 1-RELATED-RELATED"/>
    <property type="match status" value="1"/>
</dbReference>
<dbReference type="Pfam" id="PF00076">
    <property type="entry name" value="RRM_1"/>
    <property type="match status" value="1"/>
</dbReference>
<dbReference type="SMART" id="SM00360">
    <property type="entry name" value="RRM"/>
    <property type="match status" value="1"/>
</dbReference>
<dbReference type="SUPFAM" id="SSF54928">
    <property type="entry name" value="RNA-binding domain, RBD"/>
    <property type="match status" value="1"/>
</dbReference>
<dbReference type="PROSITE" id="PS50102">
    <property type="entry name" value="RRM"/>
    <property type="match status" value="1"/>
</dbReference>
<accession>Q91V81</accession>
<accession>Q3UBE0</accession>
<gene>
    <name type="primary">Rbm42</name>
</gene>
<evidence type="ECO:0000250" key="1"/>
<evidence type="ECO:0000250" key="2">
    <source>
        <dbReference type="UniProtKB" id="Q9BTD8"/>
    </source>
</evidence>
<evidence type="ECO:0000255" key="3">
    <source>
        <dbReference type="PROSITE-ProRule" id="PRU00176"/>
    </source>
</evidence>
<evidence type="ECO:0000256" key="4">
    <source>
        <dbReference type="SAM" id="MobiDB-lite"/>
    </source>
</evidence>
<evidence type="ECO:0000269" key="5">
    <source>
    </source>
</evidence>
<evidence type="ECO:0000305" key="6"/>
<evidence type="ECO:0007744" key="7">
    <source>
    </source>
</evidence>
<comment type="function">
    <text evidence="1">Binds (via the RRM domain) to the 3'-untranslated region (UTR) of CDKN1A mRNA.</text>
</comment>
<comment type="subunit">
    <text evidence="1">Interacts with HNRNPK.</text>
</comment>
<comment type="subcellular location">
    <subcellularLocation>
        <location evidence="5">Nucleus</location>
    </subcellularLocation>
    <subcellularLocation>
        <location evidence="5">Cytoplasm</location>
    </subcellularLocation>
    <text>Upon stress response, localizes with HNRNPK in cytoplasmic aggregates of stalled translational preinitiation complexes called stress granules.</text>
</comment>
<comment type="tissue specificity">
    <text evidence="5">Expressed in cell lines (at protein level). Expressed in heart, brain, spleen, lung, liver, skeletal muscle, kidney and testis.</text>
</comment>
<comment type="similarity">
    <text evidence="6">Belongs to the RRM RBM42 family.</text>
</comment>
<comment type="sequence caution" evidence="6">
    <conflict type="erroneous initiation">
        <sequence resource="EMBL-CDS" id="AAH09148"/>
    </conflict>
    <text>Truncated N-terminus.</text>
</comment>
<comment type="sequence caution" evidence="6">
    <conflict type="erroneous initiation">
        <sequence resource="EMBL-CDS" id="AAH11286"/>
    </conflict>
    <text>Truncated N-terminus.</text>
</comment>
<comment type="sequence caution" evidence="6">
    <conflict type="erroneous initiation">
        <sequence resource="EMBL-CDS" id="AAH27372"/>
    </conflict>
    <text>Truncated N-terminus.</text>
</comment>
<comment type="sequence caution" evidence="6">
    <conflict type="erroneous initiation">
        <sequence resource="EMBL-CDS" id="AAH57928"/>
    </conflict>
    <text>Truncated N-terminus.</text>
</comment>
<name>RBM42_MOUSE</name>
<protein>
    <recommendedName>
        <fullName>RNA-binding protein 42</fullName>
    </recommendedName>
    <alternativeName>
        <fullName>RNA-binding motif protein 42</fullName>
    </alternativeName>
</protein>
<keyword id="KW-0007">Acetylation</keyword>
<keyword id="KW-0963">Cytoplasm</keyword>
<keyword id="KW-0488">Methylation</keyword>
<keyword id="KW-0539">Nucleus</keyword>
<keyword id="KW-0597">Phosphoprotein</keyword>
<keyword id="KW-1185">Reference proteome</keyword>
<keyword id="KW-0694">RNA-binding</keyword>